<keyword id="KW-0966">Cell projection</keyword>
<keyword id="KW-0969">Cilium</keyword>
<keyword id="KW-0970">Cilium biogenesis/degradation</keyword>
<keyword id="KW-0175">Coiled coil</keyword>
<keyword id="KW-0963">Cytoplasm</keyword>
<keyword id="KW-0206">Cytoskeleton</keyword>
<keyword id="KW-0653">Protein transport</keyword>
<keyword id="KW-1185">Reference proteome</keyword>
<keyword id="KW-0813">Transport</keyword>
<reference evidence="8" key="1">
    <citation type="journal article" date="1998" name="Science">
        <title>Genome sequence of the nematode C. elegans: a platform for investigating biology.</title>
        <authorList>
            <consortium name="The C. elegans sequencing consortium"/>
        </authorList>
    </citation>
    <scope>NUCLEOTIDE SEQUENCE [LARGE SCALE GENOMIC DNA]</scope>
    <source>
        <strain evidence="8">Bristol N2</strain>
    </source>
</reference>
<reference evidence="7" key="2">
    <citation type="journal article" date="2003" name="Nature">
        <title>Basal body dysfunction is a likely cause of pleiotropic Bardet-Biedl syndrome.</title>
        <authorList>
            <person name="Ansley S.J."/>
            <person name="Badano J.L."/>
            <person name="Blacque O.E."/>
            <person name="Hill J."/>
            <person name="Hoskins B.E."/>
            <person name="Leitch C.C."/>
            <person name="Kim J.C."/>
            <person name="Ross A.J."/>
            <person name="Eichers E.R."/>
            <person name="Teslovich T.M."/>
            <person name="Mah A.K."/>
            <person name="Johnsen R.C."/>
            <person name="Cavender J.C."/>
            <person name="Lewis R.A."/>
            <person name="Leroux M.R."/>
            <person name="Beales P.L."/>
            <person name="Katsanis N."/>
        </authorList>
    </citation>
    <scope>TISSUE SPECIFICITY</scope>
</reference>
<reference evidence="7" key="3">
    <citation type="journal article" date="2004" name="Genes Dev.">
        <title>Loss of C. elegans BBS-7 and BBS-8 protein function results in cilia defects and compromised intraflagellar transport.</title>
        <authorList>
            <person name="Blacque O.E."/>
            <person name="Reardon M.J."/>
            <person name="Li C."/>
            <person name="McCarthy J."/>
            <person name="Mahjoub M.R."/>
            <person name="Ansley S.J."/>
            <person name="Badano J.L."/>
            <person name="Mah A.K."/>
            <person name="Beales P.L."/>
            <person name="Davidson W.S."/>
            <person name="Johnsen R.C."/>
            <person name="Audeh M."/>
            <person name="Plasterk R.H."/>
            <person name="Baillie D.L."/>
            <person name="Katsanis N."/>
            <person name="Quarmby L.M."/>
            <person name="Wicks S.R."/>
            <person name="Leroux M.R."/>
        </authorList>
    </citation>
    <scope>FUNCTION</scope>
    <scope>SUBCELLULAR LOCATION</scope>
    <scope>TISSUE SPECIFICITY</scope>
</reference>
<reference evidence="7" key="4">
    <citation type="journal article" date="2011" name="PLoS Genet.">
        <title>Mutations in a guanylate cyclase GCY-35/GCY-36 modify Bardet-Biedl syndrome-associated phenotypes in Caenorhabditis elegans.</title>
        <authorList>
            <person name="Mok C.A."/>
            <person name="Healey M.P."/>
            <person name="Shekhar T."/>
            <person name="Leroux M.R."/>
            <person name="Heon E."/>
            <person name="Zhen M."/>
        </authorList>
    </citation>
    <scope>FUNCTION</scope>
    <scope>DISRUPTION PHENOTYPE</scope>
</reference>
<reference evidence="7" key="5">
    <citation type="journal article" date="2012" name="Nat. Cell Biol.">
        <title>The BBSome controls IFT assembly and turnaround in cilia.</title>
        <authorList>
            <person name="Wei Q."/>
            <person name="Zhang Y."/>
            <person name="Li Y."/>
            <person name="Zhang Q."/>
            <person name="Ling K."/>
            <person name="Hu J."/>
        </authorList>
    </citation>
    <scope>FUNCTION</scope>
    <scope>DISRUPTION PHENOTYPE</scope>
</reference>
<protein>
    <recommendedName>
        <fullName evidence="7">BBSome complex member bbs-2</fullName>
    </recommendedName>
    <alternativeName>
        <fullName evidence="9">Bardet-Biedl syndrome 2 protein homolog</fullName>
    </alternativeName>
</protein>
<name>BBS2_CAEEL</name>
<comment type="function">
    <text evidence="1 4 5 6">Component of the BBSome complex (By similarity). The BBSome complex is thought to function as a coat complex required for sorting of specific membrane proteins to the primary cilia. The BBSome complex is required for ciliogenesis but is dispensable for centriolar satellite function (By similarity). Required for proper BBSome complex assembly and its ciliary localization (PubMed:22922713). Required for cilia biogenesis and both the assembly and movement of intraflagellar transport proteins along the ciliary axoneme (PubMed:15231740, PubMed:22022287, PubMed:22922713).</text>
</comment>
<comment type="subunit">
    <text evidence="1">Part of BBSome complex, that contains at least bbs-1, bbs-2, bbs-4, bbs-5, osm-12, bbs-8/ttc-8 and bbs-9.</text>
</comment>
<comment type="subcellular location">
    <subcellularLocation>
        <location evidence="4">Cell projection</location>
        <location evidence="4">Cilium</location>
    </subcellularLocation>
    <subcellularLocation>
        <location evidence="4">Cytoplasm</location>
        <location evidence="4">Cytoskeleton</location>
        <location evidence="4">Cilium basal body</location>
    </subcellularLocation>
    <subcellularLocation>
        <location evidence="4">Cytoplasm</location>
        <location evidence="4">Cytoskeleton</location>
        <location evidence="4">Cilium axoneme</location>
    </subcellularLocation>
</comment>
<comment type="tissue specificity">
    <text evidence="3 4">Expressed in ciliated cells including amphid and both inner and outer labial neurons of the head and in both phasmid neurons PHA and PHB in the tail at larval stages L1 and L2.</text>
</comment>
<comment type="disruption phenotype">
    <text evidence="5 6">Mutants have normal body morphology, but with reduced body length and width, delayed larval development and decreased roaming movements (PubMed:22022287). Defective cilia structure and function (PubMed:22022287). Disrupted assembly of the BBSome complex at the base of the cilia (PubMed:22922713).</text>
</comment>
<dbReference type="EMBL" id="BX284604">
    <property type="protein sequence ID" value="CCD67718.2"/>
    <property type="molecule type" value="Genomic_DNA"/>
</dbReference>
<dbReference type="PIR" id="T16109">
    <property type="entry name" value="T16109"/>
</dbReference>
<dbReference type="RefSeq" id="NP_501325.2">
    <property type="nucleotide sequence ID" value="NM_068924.3"/>
</dbReference>
<dbReference type="SMR" id="Q19640"/>
<dbReference type="ComplexPortal" id="CPX-428">
    <property type="entry name" value="BBSome complex"/>
</dbReference>
<dbReference type="FunCoup" id="Q19640">
    <property type="interactions" value="1066"/>
</dbReference>
<dbReference type="STRING" id="6239.F20D12.3.1"/>
<dbReference type="TCDB" id="3.A.33.1.2">
    <property type="family name" value="the bbsome complex (bbsome) family"/>
</dbReference>
<dbReference type="PaxDb" id="6239-F20D12.3"/>
<dbReference type="EnsemblMetazoa" id="F20D12.3.1">
    <property type="protein sequence ID" value="F20D12.3.1"/>
    <property type="gene ID" value="WBGene00000242"/>
</dbReference>
<dbReference type="GeneID" id="259580"/>
<dbReference type="KEGG" id="cel:CELE_F20D12.3"/>
<dbReference type="UCSC" id="F20D12.3">
    <property type="organism name" value="c. elegans"/>
</dbReference>
<dbReference type="AGR" id="WB:WBGene00000242"/>
<dbReference type="CTD" id="259580"/>
<dbReference type="WormBase" id="F20D12.3">
    <property type="protein sequence ID" value="CE49510"/>
    <property type="gene ID" value="WBGene00000242"/>
    <property type="gene designation" value="bbs-2"/>
</dbReference>
<dbReference type="eggNOG" id="ENOG502QPWU">
    <property type="taxonomic scope" value="Eukaryota"/>
</dbReference>
<dbReference type="GeneTree" id="ENSGT00390000017113"/>
<dbReference type="HOGENOM" id="CLU_023359_0_0_1"/>
<dbReference type="InParanoid" id="Q19640"/>
<dbReference type="OMA" id="MESVAHF"/>
<dbReference type="OrthoDB" id="2120021at2759"/>
<dbReference type="Reactome" id="R-CEL-5620922">
    <property type="pathway name" value="BBSome-mediated cargo-targeting to cilium"/>
</dbReference>
<dbReference type="PRO" id="PR:Q19640"/>
<dbReference type="Proteomes" id="UP000001940">
    <property type="component" value="Chromosome IV"/>
</dbReference>
<dbReference type="Bgee" id="WBGene00000242">
    <property type="expression patterns" value="Expressed in pharyngeal muscle cell (C elegans) and 3 other cell types or tissues"/>
</dbReference>
<dbReference type="GO" id="GO:0034464">
    <property type="term" value="C:BBSome"/>
    <property type="evidence" value="ECO:0000318"/>
    <property type="project" value="GO_Central"/>
</dbReference>
<dbReference type="GO" id="GO:0036064">
    <property type="term" value="C:ciliary basal body"/>
    <property type="evidence" value="ECO:0000314"/>
    <property type="project" value="MGI"/>
</dbReference>
<dbReference type="GO" id="GO:0005929">
    <property type="term" value="C:cilium"/>
    <property type="evidence" value="ECO:0000303"/>
    <property type="project" value="ComplexPortal"/>
</dbReference>
<dbReference type="GO" id="GO:0005737">
    <property type="term" value="C:cytoplasm"/>
    <property type="evidence" value="ECO:0007669"/>
    <property type="project" value="UniProtKB-KW"/>
</dbReference>
<dbReference type="GO" id="GO:0016020">
    <property type="term" value="C:membrane"/>
    <property type="evidence" value="ECO:0000318"/>
    <property type="project" value="GO_Central"/>
</dbReference>
<dbReference type="GO" id="GO:0031514">
    <property type="term" value="C:motile cilium"/>
    <property type="evidence" value="ECO:0000318"/>
    <property type="project" value="GO_Central"/>
</dbReference>
<dbReference type="GO" id="GO:0043005">
    <property type="term" value="C:neuron projection"/>
    <property type="evidence" value="ECO:0000314"/>
    <property type="project" value="BHF-UCL"/>
</dbReference>
<dbReference type="GO" id="GO:0060271">
    <property type="term" value="P:cilium assembly"/>
    <property type="evidence" value="ECO:0000318"/>
    <property type="project" value="GO_Central"/>
</dbReference>
<dbReference type="GO" id="GO:1905515">
    <property type="term" value="P:non-motile cilium assembly"/>
    <property type="evidence" value="ECO:0000270"/>
    <property type="project" value="BHF-UCL"/>
</dbReference>
<dbReference type="GO" id="GO:0015031">
    <property type="term" value="P:protein transport"/>
    <property type="evidence" value="ECO:0007669"/>
    <property type="project" value="UniProtKB-KW"/>
</dbReference>
<dbReference type="FunFam" id="2.130.10.10:FF:000967">
    <property type="entry name" value="Bardet-Biedl syndrome 2 protein homolog"/>
    <property type="match status" value="1"/>
</dbReference>
<dbReference type="Gene3D" id="2.130.10.10">
    <property type="entry name" value="YVTN repeat-like/Quinoprotein amine dehydrogenase"/>
    <property type="match status" value="1"/>
</dbReference>
<dbReference type="InterPro" id="IPR016616">
    <property type="entry name" value="Bardet-Biedl_syndrome_2_prot"/>
</dbReference>
<dbReference type="InterPro" id="IPR029333">
    <property type="entry name" value="BBS2_GAE_dom"/>
</dbReference>
<dbReference type="InterPro" id="IPR055380">
    <property type="entry name" value="BBS2_hp_dom"/>
</dbReference>
<dbReference type="InterPro" id="IPR029429">
    <property type="entry name" value="BBS2_Mid"/>
</dbReference>
<dbReference type="InterPro" id="IPR029430">
    <property type="entry name" value="BBS2_N"/>
</dbReference>
<dbReference type="InterPro" id="IPR055379">
    <property type="entry name" value="BBS2_pf_dom"/>
</dbReference>
<dbReference type="InterPro" id="IPR015943">
    <property type="entry name" value="WD40/YVTN_repeat-like_dom_sf"/>
</dbReference>
<dbReference type="InterPro" id="IPR036322">
    <property type="entry name" value="WD40_repeat_dom_sf"/>
</dbReference>
<dbReference type="PANTHER" id="PTHR32465">
    <property type="entry name" value="BARDET-BIEDL SYNDROME 2 PROTEIN"/>
    <property type="match status" value="1"/>
</dbReference>
<dbReference type="PANTHER" id="PTHR32465:SF0">
    <property type="entry name" value="BARDET-BIEDL SYNDROME 2 PROTEIN"/>
    <property type="match status" value="1"/>
</dbReference>
<dbReference type="Pfam" id="PF14782">
    <property type="entry name" value="BBS2_GAE"/>
    <property type="match status" value="1"/>
</dbReference>
<dbReference type="Pfam" id="PF23353">
    <property type="entry name" value="BBS2_hp"/>
    <property type="match status" value="1"/>
</dbReference>
<dbReference type="Pfam" id="PF14783">
    <property type="entry name" value="BBS2_Mid"/>
    <property type="match status" value="1"/>
</dbReference>
<dbReference type="Pfam" id="PF14781">
    <property type="entry name" value="BBS2_N"/>
    <property type="match status" value="1"/>
</dbReference>
<dbReference type="Pfam" id="PF23350">
    <property type="entry name" value="BBS2_pf"/>
    <property type="match status" value="1"/>
</dbReference>
<dbReference type="PIRSF" id="PIRSF013684">
    <property type="entry name" value="BBS2"/>
    <property type="match status" value="1"/>
</dbReference>
<dbReference type="SUPFAM" id="SSF50978">
    <property type="entry name" value="WD40 repeat-like"/>
    <property type="match status" value="1"/>
</dbReference>
<feature type="chain" id="PRO_0000434995" description="BBSome complex member bbs-2" evidence="7">
    <location>
        <begin position="1"/>
        <end position="714"/>
    </location>
</feature>
<feature type="coiled-coil region" evidence="2">
    <location>
        <begin position="332"/>
        <end position="361"/>
    </location>
</feature>
<feature type="coiled-coil region" evidence="2">
    <location>
        <begin position="597"/>
        <end position="627"/>
    </location>
</feature>
<sequence>MDGDRTPEEQIEIAESDQGPQLDDNVELANVFSYSLDQRIMEGCVISAILEPRGLETIVAVSVTNKIIIKDKETSLNITETIRCIAAAPFGDGYDCIIIGTDSSVICYDVHNNLTVFRNDVPDGVSCFVYGKLGELDEAIYCGGNCCIWGFDKTGANTYWTVTGDQVTTMCLSDYDNDGETELVIGSPDFEIRVFKNDLMRTELMETDEITCLAHVANGCFAYSLNNGTIGTYVLKERQWRIKSKSNVSKIFNFEEEGLMVVVWKQGKVDLRFAHNGEVLSRDSVSSHVASASVSKKGDESFITVVCLDGKVKGFKIQRAQNGSIDKTQQLIREFGQKKHNLMMELSNYEQEEQLADVEKDRDFRIPVDTEVAVVFVVNTELQLLSLRVEASHNIPIRGVLIFAEGLFEGESYIWIPPNEYQSRSVIDIPLVIDKDSTNDLHTKVFLGQVDSNKLMVMENTRILPKFCRFTLLREEYSKFFYMPTAYIQFDINSRAAKLSEWVQESFTIDASLVEMFDEPEGEFKFMGLRPKHEKSLMFKISHSEKTCKIYHDKIETMGAIVQSYASFYQIQNMESVAHFPDVFKEADEILEEIDPMTEVRDRLTAELQERQAAVKEIIIRAEDSIAIDNIPDARKFYIRLKANDAAARQAAQLRWNNQERCVKSLRRLNKIIENCSRLRVGEPGRQIVVSCRSAIADDNKQIITKILQYGASV</sequence>
<proteinExistence type="evidence at transcript level"/>
<evidence type="ECO:0000250" key="1">
    <source>
        <dbReference type="UniProtKB" id="Q9BXC9"/>
    </source>
</evidence>
<evidence type="ECO:0000255" key="2"/>
<evidence type="ECO:0000269" key="3">
    <source>
    </source>
</evidence>
<evidence type="ECO:0000269" key="4">
    <source>
    </source>
</evidence>
<evidence type="ECO:0000269" key="5">
    <source>
    </source>
</evidence>
<evidence type="ECO:0000269" key="6">
    <source>
    </source>
</evidence>
<evidence type="ECO:0000305" key="7"/>
<evidence type="ECO:0000312" key="8">
    <source>
        <dbReference type="Proteomes" id="UP000001940"/>
    </source>
</evidence>
<evidence type="ECO:0000312" key="9">
    <source>
        <dbReference type="WormBase" id="F20D12.3"/>
    </source>
</evidence>
<organism evidence="8">
    <name type="scientific">Caenorhabditis elegans</name>
    <dbReference type="NCBI Taxonomy" id="6239"/>
    <lineage>
        <taxon>Eukaryota</taxon>
        <taxon>Metazoa</taxon>
        <taxon>Ecdysozoa</taxon>
        <taxon>Nematoda</taxon>
        <taxon>Chromadorea</taxon>
        <taxon>Rhabditida</taxon>
        <taxon>Rhabditina</taxon>
        <taxon>Rhabditomorpha</taxon>
        <taxon>Rhabditoidea</taxon>
        <taxon>Rhabditidae</taxon>
        <taxon>Peloderinae</taxon>
        <taxon>Caenorhabditis</taxon>
    </lineage>
</organism>
<accession>Q19640</accession>
<gene>
    <name evidence="9" type="primary">bbs-2</name>
    <name evidence="9" type="ORF">F20D12.3</name>
</gene>